<keyword id="KW-0963">Cytoplasm</keyword>
<keyword id="KW-0269">Exonuclease</keyword>
<keyword id="KW-0378">Hydrolase</keyword>
<keyword id="KW-0540">Nuclease</keyword>
<keyword id="KW-1185">Reference proteome</keyword>
<sequence length="83" mass="9086">MTDVAATDIAAYSFEKAVAELESIVARLERGDVALDESISIYERGELLKKHCEALLSAAENRIEKIRLDRAGKPVGAEPLDKD</sequence>
<accession>B9JSL3</accession>
<evidence type="ECO:0000255" key="1">
    <source>
        <dbReference type="HAMAP-Rule" id="MF_00337"/>
    </source>
</evidence>
<reference key="1">
    <citation type="journal article" date="2009" name="J. Bacteriol.">
        <title>Genome sequences of three Agrobacterium biovars help elucidate the evolution of multichromosome genomes in bacteria.</title>
        <authorList>
            <person name="Slater S.C."/>
            <person name="Goldman B.S."/>
            <person name="Goodner B."/>
            <person name="Setubal J.C."/>
            <person name="Farrand S.K."/>
            <person name="Nester E.W."/>
            <person name="Burr T.J."/>
            <person name="Banta L."/>
            <person name="Dickerman A.W."/>
            <person name="Paulsen I."/>
            <person name="Otten L."/>
            <person name="Suen G."/>
            <person name="Welch R."/>
            <person name="Almeida N.F."/>
            <person name="Arnold F."/>
            <person name="Burton O.T."/>
            <person name="Du Z."/>
            <person name="Ewing A."/>
            <person name="Godsy E."/>
            <person name="Heisel S."/>
            <person name="Houmiel K.L."/>
            <person name="Jhaveri J."/>
            <person name="Lu J."/>
            <person name="Miller N.M."/>
            <person name="Norton S."/>
            <person name="Chen Q."/>
            <person name="Phoolcharoen W."/>
            <person name="Ohlin V."/>
            <person name="Ondrusek D."/>
            <person name="Pride N."/>
            <person name="Stricklin S.L."/>
            <person name="Sun J."/>
            <person name="Wheeler C."/>
            <person name="Wilson L."/>
            <person name="Zhu H."/>
            <person name="Wood D.W."/>
        </authorList>
    </citation>
    <scope>NUCLEOTIDE SEQUENCE [LARGE SCALE GENOMIC DNA]</scope>
    <source>
        <strain>ATCC BAA-846 / DSM 112012 / S4</strain>
    </source>
</reference>
<gene>
    <name evidence="1" type="primary">xseB</name>
    <name type="ordered locus">Avi_0998</name>
</gene>
<feature type="chain" id="PRO_1000200240" description="Exodeoxyribonuclease 7 small subunit">
    <location>
        <begin position="1"/>
        <end position="83"/>
    </location>
</feature>
<comment type="function">
    <text evidence="1">Bidirectionally degrades single-stranded DNA into large acid-insoluble oligonucleotides, which are then degraded further into small acid-soluble oligonucleotides.</text>
</comment>
<comment type="catalytic activity">
    <reaction evidence="1">
        <text>Exonucleolytic cleavage in either 5'- to 3'- or 3'- to 5'-direction to yield nucleoside 5'-phosphates.</text>
        <dbReference type="EC" id="3.1.11.6"/>
    </reaction>
</comment>
<comment type="subunit">
    <text evidence="1">Heterooligomer composed of large and small subunits.</text>
</comment>
<comment type="subcellular location">
    <subcellularLocation>
        <location evidence="1">Cytoplasm</location>
    </subcellularLocation>
</comment>
<comment type="similarity">
    <text evidence="1">Belongs to the XseB family.</text>
</comment>
<organism>
    <name type="scientific">Allorhizobium ampelinum (strain ATCC BAA-846 / DSM 112012 / S4)</name>
    <name type="common">Agrobacterium vitis (strain S4)</name>
    <dbReference type="NCBI Taxonomy" id="311402"/>
    <lineage>
        <taxon>Bacteria</taxon>
        <taxon>Pseudomonadati</taxon>
        <taxon>Pseudomonadota</taxon>
        <taxon>Alphaproteobacteria</taxon>
        <taxon>Hyphomicrobiales</taxon>
        <taxon>Rhizobiaceae</taxon>
        <taxon>Rhizobium/Agrobacterium group</taxon>
        <taxon>Allorhizobium</taxon>
        <taxon>Allorhizobium ampelinum</taxon>
    </lineage>
</organism>
<protein>
    <recommendedName>
        <fullName evidence="1">Exodeoxyribonuclease 7 small subunit</fullName>
        <ecNumber evidence="1">3.1.11.6</ecNumber>
    </recommendedName>
    <alternativeName>
        <fullName evidence="1">Exodeoxyribonuclease VII small subunit</fullName>
        <shortName evidence="1">Exonuclease VII small subunit</shortName>
    </alternativeName>
</protein>
<proteinExistence type="inferred from homology"/>
<name>EX7S_ALLAM</name>
<dbReference type="EC" id="3.1.11.6" evidence="1"/>
<dbReference type="EMBL" id="CP000633">
    <property type="protein sequence ID" value="ACM35706.1"/>
    <property type="molecule type" value="Genomic_DNA"/>
</dbReference>
<dbReference type="RefSeq" id="WP_015915130.1">
    <property type="nucleotide sequence ID" value="NC_011989.1"/>
</dbReference>
<dbReference type="SMR" id="B9JSL3"/>
<dbReference type="STRING" id="311402.Avi_0998"/>
<dbReference type="KEGG" id="avi:Avi_0998"/>
<dbReference type="eggNOG" id="COG1722">
    <property type="taxonomic scope" value="Bacteria"/>
</dbReference>
<dbReference type="HOGENOM" id="CLU_145918_0_3_5"/>
<dbReference type="Proteomes" id="UP000001596">
    <property type="component" value="Chromosome 1"/>
</dbReference>
<dbReference type="GO" id="GO:0005829">
    <property type="term" value="C:cytosol"/>
    <property type="evidence" value="ECO:0007669"/>
    <property type="project" value="TreeGrafter"/>
</dbReference>
<dbReference type="GO" id="GO:0009318">
    <property type="term" value="C:exodeoxyribonuclease VII complex"/>
    <property type="evidence" value="ECO:0007669"/>
    <property type="project" value="InterPro"/>
</dbReference>
<dbReference type="GO" id="GO:0008855">
    <property type="term" value="F:exodeoxyribonuclease VII activity"/>
    <property type="evidence" value="ECO:0007669"/>
    <property type="project" value="UniProtKB-UniRule"/>
</dbReference>
<dbReference type="GO" id="GO:0006308">
    <property type="term" value="P:DNA catabolic process"/>
    <property type="evidence" value="ECO:0007669"/>
    <property type="project" value="UniProtKB-UniRule"/>
</dbReference>
<dbReference type="Gene3D" id="1.10.287.1040">
    <property type="entry name" value="Exonuclease VII, small subunit"/>
    <property type="match status" value="1"/>
</dbReference>
<dbReference type="HAMAP" id="MF_00337">
    <property type="entry name" value="Exonuc_7_S"/>
    <property type="match status" value="1"/>
</dbReference>
<dbReference type="InterPro" id="IPR003761">
    <property type="entry name" value="Exonuc_VII_S"/>
</dbReference>
<dbReference type="InterPro" id="IPR037004">
    <property type="entry name" value="Exonuc_VII_ssu_sf"/>
</dbReference>
<dbReference type="NCBIfam" id="NF002139">
    <property type="entry name" value="PRK00977.1-3"/>
    <property type="match status" value="1"/>
</dbReference>
<dbReference type="NCBIfam" id="TIGR01280">
    <property type="entry name" value="xseB"/>
    <property type="match status" value="1"/>
</dbReference>
<dbReference type="PANTHER" id="PTHR34137">
    <property type="entry name" value="EXODEOXYRIBONUCLEASE 7 SMALL SUBUNIT"/>
    <property type="match status" value="1"/>
</dbReference>
<dbReference type="PANTHER" id="PTHR34137:SF1">
    <property type="entry name" value="EXODEOXYRIBONUCLEASE 7 SMALL SUBUNIT"/>
    <property type="match status" value="1"/>
</dbReference>
<dbReference type="Pfam" id="PF02609">
    <property type="entry name" value="Exonuc_VII_S"/>
    <property type="match status" value="1"/>
</dbReference>
<dbReference type="SUPFAM" id="SSF116842">
    <property type="entry name" value="XseB-like"/>
    <property type="match status" value="1"/>
</dbReference>